<accession>A8A6J6</accession>
<feature type="chain" id="PRO_1000062291" description="ATP synthase gamma chain">
    <location>
        <begin position="1"/>
        <end position="287"/>
    </location>
</feature>
<dbReference type="EMBL" id="CP000802">
    <property type="protein sequence ID" value="ABV08150.1"/>
    <property type="molecule type" value="Genomic_DNA"/>
</dbReference>
<dbReference type="RefSeq" id="WP_000896498.1">
    <property type="nucleotide sequence ID" value="NC_009800.1"/>
</dbReference>
<dbReference type="SMR" id="A8A6J6"/>
<dbReference type="GeneID" id="93778234"/>
<dbReference type="KEGG" id="ecx:EcHS_A3949"/>
<dbReference type="HOGENOM" id="CLU_050669_0_1_6"/>
<dbReference type="GO" id="GO:0005886">
    <property type="term" value="C:plasma membrane"/>
    <property type="evidence" value="ECO:0007669"/>
    <property type="project" value="UniProtKB-SubCell"/>
</dbReference>
<dbReference type="GO" id="GO:0045259">
    <property type="term" value="C:proton-transporting ATP synthase complex"/>
    <property type="evidence" value="ECO:0007669"/>
    <property type="project" value="UniProtKB-KW"/>
</dbReference>
<dbReference type="GO" id="GO:0005524">
    <property type="term" value="F:ATP binding"/>
    <property type="evidence" value="ECO:0007669"/>
    <property type="project" value="UniProtKB-UniRule"/>
</dbReference>
<dbReference type="GO" id="GO:0046933">
    <property type="term" value="F:proton-transporting ATP synthase activity, rotational mechanism"/>
    <property type="evidence" value="ECO:0007669"/>
    <property type="project" value="UniProtKB-UniRule"/>
</dbReference>
<dbReference type="GO" id="GO:0042777">
    <property type="term" value="P:proton motive force-driven plasma membrane ATP synthesis"/>
    <property type="evidence" value="ECO:0007669"/>
    <property type="project" value="UniProtKB-UniRule"/>
</dbReference>
<dbReference type="CDD" id="cd12151">
    <property type="entry name" value="F1-ATPase_gamma"/>
    <property type="match status" value="1"/>
</dbReference>
<dbReference type="FunFam" id="1.10.287.80:FF:000005">
    <property type="entry name" value="ATP synthase gamma chain"/>
    <property type="match status" value="2"/>
</dbReference>
<dbReference type="FunFam" id="3.40.1380.10:FF:000001">
    <property type="entry name" value="ATP synthase gamma chain"/>
    <property type="match status" value="1"/>
</dbReference>
<dbReference type="Gene3D" id="3.40.1380.10">
    <property type="match status" value="1"/>
</dbReference>
<dbReference type="Gene3D" id="1.10.287.80">
    <property type="entry name" value="ATP synthase, gamma subunit, helix hairpin domain"/>
    <property type="match status" value="1"/>
</dbReference>
<dbReference type="HAMAP" id="MF_00815">
    <property type="entry name" value="ATP_synth_gamma_bact"/>
    <property type="match status" value="1"/>
</dbReference>
<dbReference type="InterPro" id="IPR035968">
    <property type="entry name" value="ATP_synth_F1_ATPase_gsu"/>
</dbReference>
<dbReference type="InterPro" id="IPR000131">
    <property type="entry name" value="ATP_synth_F1_gsu"/>
</dbReference>
<dbReference type="InterPro" id="IPR023632">
    <property type="entry name" value="ATP_synth_F1_gsu_CS"/>
</dbReference>
<dbReference type="NCBIfam" id="TIGR01146">
    <property type="entry name" value="ATPsyn_F1gamma"/>
    <property type="match status" value="1"/>
</dbReference>
<dbReference type="NCBIfam" id="NF004144">
    <property type="entry name" value="PRK05621.1-1"/>
    <property type="match status" value="1"/>
</dbReference>
<dbReference type="PANTHER" id="PTHR11693">
    <property type="entry name" value="ATP SYNTHASE GAMMA CHAIN"/>
    <property type="match status" value="1"/>
</dbReference>
<dbReference type="PANTHER" id="PTHR11693:SF22">
    <property type="entry name" value="ATP SYNTHASE SUBUNIT GAMMA, MITOCHONDRIAL"/>
    <property type="match status" value="1"/>
</dbReference>
<dbReference type="Pfam" id="PF00231">
    <property type="entry name" value="ATP-synt"/>
    <property type="match status" value="1"/>
</dbReference>
<dbReference type="PRINTS" id="PR00126">
    <property type="entry name" value="ATPASEGAMMA"/>
</dbReference>
<dbReference type="SUPFAM" id="SSF52943">
    <property type="entry name" value="ATP synthase (F1-ATPase), gamma subunit"/>
    <property type="match status" value="1"/>
</dbReference>
<dbReference type="PROSITE" id="PS00153">
    <property type="entry name" value="ATPASE_GAMMA"/>
    <property type="match status" value="1"/>
</dbReference>
<name>ATPG_ECOHS</name>
<reference key="1">
    <citation type="journal article" date="2008" name="J. Bacteriol.">
        <title>The pangenome structure of Escherichia coli: comparative genomic analysis of E. coli commensal and pathogenic isolates.</title>
        <authorList>
            <person name="Rasko D.A."/>
            <person name="Rosovitz M.J."/>
            <person name="Myers G.S.A."/>
            <person name="Mongodin E.F."/>
            <person name="Fricke W.F."/>
            <person name="Gajer P."/>
            <person name="Crabtree J."/>
            <person name="Sebaihia M."/>
            <person name="Thomson N.R."/>
            <person name="Chaudhuri R."/>
            <person name="Henderson I.R."/>
            <person name="Sperandio V."/>
            <person name="Ravel J."/>
        </authorList>
    </citation>
    <scope>NUCLEOTIDE SEQUENCE [LARGE SCALE GENOMIC DNA]</scope>
    <source>
        <strain>HS</strain>
    </source>
</reference>
<protein>
    <recommendedName>
        <fullName evidence="1">ATP synthase gamma chain</fullName>
    </recommendedName>
    <alternativeName>
        <fullName evidence="1">ATP synthase F1 sector gamma subunit</fullName>
    </alternativeName>
    <alternativeName>
        <fullName evidence="1">F-ATPase gamma subunit</fullName>
    </alternativeName>
</protein>
<evidence type="ECO:0000255" key="1">
    <source>
        <dbReference type="HAMAP-Rule" id="MF_00815"/>
    </source>
</evidence>
<organism>
    <name type="scientific">Escherichia coli O9:H4 (strain HS)</name>
    <dbReference type="NCBI Taxonomy" id="331112"/>
    <lineage>
        <taxon>Bacteria</taxon>
        <taxon>Pseudomonadati</taxon>
        <taxon>Pseudomonadota</taxon>
        <taxon>Gammaproteobacteria</taxon>
        <taxon>Enterobacterales</taxon>
        <taxon>Enterobacteriaceae</taxon>
        <taxon>Escherichia</taxon>
    </lineage>
</organism>
<comment type="function">
    <text evidence="1">Produces ATP from ADP in the presence of a proton gradient across the membrane. The gamma chain is believed to be important in regulating ATPase activity and the flow of protons through the CF(0) complex.</text>
</comment>
<comment type="subunit">
    <text evidence="1">F-type ATPases have 2 components, CF(1) - the catalytic core - and CF(0) - the membrane proton channel. CF(1) has five subunits: alpha(3), beta(3), gamma(1), delta(1), epsilon(1). CF(0) has three main subunits: a, b and c.</text>
</comment>
<comment type="subcellular location">
    <subcellularLocation>
        <location evidence="1">Cell inner membrane</location>
        <topology evidence="1">Peripheral membrane protein</topology>
    </subcellularLocation>
</comment>
<comment type="similarity">
    <text evidence="1">Belongs to the ATPase gamma chain family.</text>
</comment>
<gene>
    <name evidence="1" type="primary">atpG</name>
    <name type="ordered locus">EcHS_A3949</name>
</gene>
<sequence length="287" mass="31577">MAGAKEIRSKIASVQNTQKITKAMEMVAASKMRKSQDRMAASRPYAETMRKVIGHLAHGNLEYKHPYLEDRDVKRVGYLVVSTDRGLCGGLNINLFKKLLAEMKTWTDKGVQCDLAMIGSKGVSFFNSVGGNVVAQVTGMGDNPSLSELIGPVKVMLQAYDEGRLDKLYIVSNKFINTMSQVPTISQLLPLPASDDDDLKHKSWDYLYEPDPKALLDTLLRRYVESQVYQGVVENLASEQAARMVAMKAATDNGGSLIKELQLVYNKARQASITQELTEIVSGAAAV</sequence>
<keyword id="KW-0066">ATP synthesis</keyword>
<keyword id="KW-0997">Cell inner membrane</keyword>
<keyword id="KW-1003">Cell membrane</keyword>
<keyword id="KW-0139">CF(1)</keyword>
<keyword id="KW-0375">Hydrogen ion transport</keyword>
<keyword id="KW-0406">Ion transport</keyword>
<keyword id="KW-0472">Membrane</keyword>
<keyword id="KW-0813">Transport</keyword>
<proteinExistence type="inferred from homology"/>